<comment type="function">
    <text evidence="1">Catalyzes the anti-1,4-elimination of the C-3 phosphate and the C-6 proR hydrogen from 5-enolpyruvylshikimate-3-phosphate (EPSP) to yield chorismate, which is the branch point compound that serves as the starting substrate for the three terminal pathways of aromatic amino acid biosynthesis. This reaction introduces a second double bond into the aromatic ring system.</text>
</comment>
<comment type="catalytic activity">
    <reaction evidence="1">
        <text>5-O-(1-carboxyvinyl)-3-phosphoshikimate = chorismate + phosphate</text>
        <dbReference type="Rhea" id="RHEA:21020"/>
        <dbReference type="ChEBI" id="CHEBI:29748"/>
        <dbReference type="ChEBI" id="CHEBI:43474"/>
        <dbReference type="ChEBI" id="CHEBI:57701"/>
        <dbReference type="EC" id="4.2.3.5"/>
    </reaction>
</comment>
<comment type="cofactor">
    <cofactor evidence="1">
        <name>FMNH2</name>
        <dbReference type="ChEBI" id="CHEBI:57618"/>
    </cofactor>
    <text evidence="1">Reduced FMN (FMNH(2)).</text>
</comment>
<comment type="pathway">
    <text evidence="1">Metabolic intermediate biosynthesis; chorismate biosynthesis; chorismate from D-erythrose 4-phosphate and phosphoenolpyruvate: step 7/7.</text>
</comment>
<comment type="subunit">
    <text evidence="1">Homotetramer.</text>
</comment>
<comment type="similarity">
    <text evidence="1">Belongs to the chorismate synthase family.</text>
</comment>
<name>AROC_STRT2</name>
<gene>
    <name evidence="1" type="primary">aroC</name>
    <name type="ordered locus">stu0641</name>
</gene>
<protein>
    <recommendedName>
        <fullName evidence="1">Chorismate synthase</fullName>
        <shortName evidence="1">CS</shortName>
        <ecNumber evidence="1">4.2.3.5</ecNumber>
    </recommendedName>
    <alternativeName>
        <fullName evidence="1">5-enolpyruvylshikimate-3-phosphate phospholyase</fullName>
    </alternativeName>
</protein>
<sequence>MRYLTAGESHGPRLTAIIEGVPAGLPLTAEDINGDLKRRQGGYGRGGRMKIESDKVEITSGVRHGKTTGAPITLHVINKDHQKWLDIMAVEDIEDRLKTKRKITHPRPGHADLVGGMKYRFDDLRNSLERSSARETTMRVAVGAVAKRILAELDIEIANHVVVFGGKEIDVPENLTVAQIKELAQQSEISVVNQEREQEIKDYIDQIKKEGDTIGGVVETVVGGVPVGLGSYVQWDTKLDAKIAQAVVSINAFKGVEFGLGFKDGYLRGSQVMDEILWNEEDGYTRRTNNLGGFEGGMTNGQPIVVRGVMKPIPTLYKPLMSVDIETHEPYKATVERSDPTALPAAGVVMESVVATVVANEILDKFSSDNLEELKEAVAHHRDYVKNF</sequence>
<organism>
    <name type="scientific">Streptococcus thermophilus (strain ATCC BAA-250 / LMG 18311)</name>
    <dbReference type="NCBI Taxonomy" id="264199"/>
    <lineage>
        <taxon>Bacteria</taxon>
        <taxon>Bacillati</taxon>
        <taxon>Bacillota</taxon>
        <taxon>Bacilli</taxon>
        <taxon>Lactobacillales</taxon>
        <taxon>Streptococcaceae</taxon>
        <taxon>Streptococcus</taxon>
    </lineage>
</organism>
<dbReference type="EC" id="4.2.3.5" evidence="1"/>
<dbReference type="EMBL" id="CP000023">
    <property type="protein sequence ID" value="AAV60347.1"/>
    <property type="molecule type" value="Genomic_DNA"/>
</dbReference>
<dbReference type="RefSeq" id="WP_011225712.1">
    <property type="nucleotide sequence ID" value="NC_006448.1"/>
</dbReference>
<dbReference type="SMR" id="Q5M555"/>
<dbReference type="STRING" id="264199.stu0641"/>
<dbReference type="GeneID" id="66898549"/>
<dbReference type="KEGG" id="stl:stu0641"/>
<dbReference type="eggNOG" id="COG0082">
    <property type="taxonomic scope" value="Bacteria"/>
</dbReference>
<dbReference type="HOGENOM" id="CLU_034547_2_0_9"/>
<dbReference type="UniPathway" id="UPA00053">
    <property type="reaction ID" value="UER00090"/>
</dbReference>
<dbReference type="Proteomes" id="UP000001170">
    <property type="component" value="Chromosome"/>
</dbReference>
<dbReference type="GO" id="GO:0005829">
    <property type="term" value="C:cytosol"/>
    <property type="evidence" value="ECO:0007669"/>
    <property type="project" value="TreeGrafter"/>
</dbReference>
<dbReference type="GO" id="GO:0004107">
    <property type="term" value="F:chorismate synthase activity"/>
    <property type="evidence" value="ECO:0007669"/>
    <property type="project" value="UniProtKB-UniRule"/>
</dbReference>
<dbReference type="GO" id="GO:0010181">
    <property type="term" value="F:FMN binding"/>
    <property type="evidence" value="ECO:0007669"/>
    <property type="project" value="TreeGrafter"/>
</dbReference>
<dbReference type="GO" id="GO:0008652">
    <property type="term" value="P:amino acid biosynthetic process"/>
    <property type="evidence" value="ECO:0007669"/>
    <property type="project" value="UniProtKB-KW"/>
</dbReference>
<dbReference type="GO" id="GO:0009073">
    <property type="term" value="P:aromatic amino acid family biosynthetic process"/>
    <property type="evidence" value="ECO:0007669"/>
    <property type="project" value="UniProtKB-KW"/>
</dbReference>
<dbReference type="GO" id="GO:0009423">
    <property type="term" value="P:chorismate biosynthetic process"/>
    <property type="evidence" value="ECO:0007669"/>
    <property type="project" value="UniProtKB-UniRule"/>
</dbReference>
<dbReference type="CDD" id="cd07304">
    <property type="entry name" value="Chorismate_synthase"/>
    <property type="match status" value="1"/>
</dbReference>
<dbReference type="FunFam" id="3.60.150.10:FF:000002">
    <property type="entry name" value="Chorismate synthase"/>
    <property type="match status" value="1"/>
</dbReference>
<dbReference type="Gene3D" id="3.60.150.10">
    <property type="entry name" value="Chorismate synthase AroC"/>
    <property type="match status" value="1"/>
</dbReference>
<dbReference type="HAMAP" id="MF_00300">
    <property type="entry name" value="Chorismate_synth"/>
    <property type="match status" value="1"/>
</dbReference>
<dbReference type="InterPro" id="IPR000453">
    <property type="entry name" value="Chorismate_synth"/>
</dbReference>
<dbReference type="InterPro" id="IPR035904">
    <property type="entry name" value="Chorismate_synth_AroC_sf"/>
</dbReference>
<dbReference type="InterPro" id="IPR020541">
    <property type="entry name" value="Chorismate_synthase_CS"/>
</dbReference>
<dbReference type="NCBIfam" id="TIGR00033">
    <property type="entry name" value="aroC"/>
    <property type="match status" value="1"/>
</dbReference>
<dbReference type="NCBIfam" id="NF003793">
    <property type="entry name" value="PRK05382.1"/>
    <property type="match status" value="1"/>
</dbReference>
<dbReference type="PANTHER" id="PTHR21085">
    <property type="entry name" value="CHORISMATE SYNTHASE"/>
    <property type="match status" value="1"/>
</dbReference>
<dbReference type="PANTHER" id="PTHR21085:SF0">
    <property type="entry name" value="CHORISMATE SYNTHASE"/>
    <property type="match status" value="1"/>
</dbReference>
<dbReference type="Pfam" id="PF01264">
    <property type="entry name" value="Chorismate_synt"/>
    <property type="match status" value="1"/>
</dbReference>
<dbReference type="PIRSF" id="PIRSF001456">
    <property type="entry name" value="Chorismate_synth"/>
    <property type="match status" value="1"/>
</dbReference>
<dbReference type="SUPFAM" id="SSF103263">
    <property type="entry name" value="Chorismate synthase, AroC"/>
    <property type="match status" value="1"/>
</dbReference>
<dbReference type="PROSITE" id="PS00787">
    <property type="entry name" value="CHORISMATE_SYNTHASE_1"/>
    <property type="match status" value="1"/>
</dbReference>
<dbReference type="PROSITE" id="PS00788">
    <property type="entry name" value="CHORISMATE_SYNTHASE_2"/>
    <property type="match status" value="1"/>
</dbReference>
<dbReference type="PROSITE" id="PS00789">
    <property type="entry name" value="CHORISMATE_SYNTHASE_3"/>
    <property type="match status" value="1"/>
</dbReference>
<reference key="1">
    <citation type="journal article" date="2004" name="Nat. Biotechnol.">
        <title>Complete sequence and comparative genome analysis of the dairy bacterium Streptococcus thermophilus.</title>
        <authorList>
            <person name="Bolotin A."/>
            <person name="Quinquis B."/>
            <person name="Renault P."/>
            <person name="Sorokin A."/>
            <person name="Ehrlich S.D."/>
            <person name="Kulakauskas S."/>
            <person name="Lapidus A."/>
            <person name="Goltsman E."/>
            <person name="Mazur M."/>
            <person name="Pusch G.D."/>
            <person name="Fonstein M."/>
            <person name="Overbeek R."/>
            <person name="Kyprides N."/>
            <person name="Purnelle B."/>
            <person name="Prozzi D."/>
            <person name="Ngui K."/>
            <person name="Masuy D."/>
            <person name="Hancy F."/>
            <person name="Burteau S."/>
            <person name="Boutry M."/>
            <person name="Delcour J."/>
            <person name="Goffeau A."/>
            <person name="Hols P."/>
        </authorList>
    </citation>
    <scope>NUCLEOTIDE SEQUENCE [LARGE SCALE GENOMIC DNA]</scope>
    <source>
        <strain>ATCC BAA-250 / LMG 18311</strain>
    </source>
</reference>
<evidence type="ECO:0000255" key="1">
    <source>
        <dbReference type="HAMAP-Rule" id="MF_00300"/>
    </source>
</evidence>
<feature type="chain" id="PRO_0000140662" description="Chorismate synthase">
    <location>
        <begin position="1"/>
        <end position="388"/>
    </location>
</feature>
<feature type="binding site" evidence="1">
    <location>
        <position position="39"/>
    </location>
    <ligand>
        <name>NADP(+)</name>
        <dbReference type="ChEBI" id="CHEBI:58349"/>
    </ligand>
</feature>
<feature type="binding site" evidence="1">
    <location>
        <position position="45"/>
    </location>
    <ligand>
        <name>NADP(+)</name>
        <dbReference type="ChEBI" id="CHEBI:58349"/>
    </ligand>
</feature>
<feature type="binding site" evidence="1">
    <location>
        <begin position="130"/>
        <end position="132"/>
    </location>
    <ligand>
        <name>FMN</name>
        <dbReference type="ChEBI" id="CHEBI:58210"/>
    </ligand>
</feature>
<feature type="binding site" evidence="1">
    <location>
        <begin position="251"/>
        <end position="252"/>
    </location>
    <ligand>
        <name>FMN</name>
        <dbReference type="ChEBI" id="CHEBI:58210"/>
    </ligand>
</feature>
<feature type="binding site" evidence="1">
    <location>
        <position position="296"/>
    </location>
    <ligand>
        <name>FMN</name>
        <dbReference type="ChEBI" id="CHEBI:58210"/>
    </ligand>
</feature>
<feature type="binding site" evidence="1">
    <location>
        <begin position="311"/>
        <end position="315"/>
    </location>
    <ligand>
        <name>FMN</name>
        <dbReference type="ChEBI" id="CHEBI:58210"/>
    </ligand>
</feature>
<feature type="binding site" evidence="1">
    <location>
        <position position="337"/>
    </location>
    <ligand>
        <name>FMN</name>
        <dbReference type="ChEBI" id="CHEBI:58210"/>
    </ligand>
</feature>
<keyword id="KW-0028">Amino-acid biosynthesis</keyword>
<keyword id="KW-0057">Aromatic amino acid biosynthesis</keyword>
<keyword id="KW-0274">FAD</keyword>
<keyword id="KW-0285">Flavoprotein</keyword>
<keyword id="KW-0288">FMN</keyword>
<keyword id="KW-0456">Lyase</keyword>
<keyword id="KW-0521">NADP</keyword>
<keyword id="KW-1185">Reference proteome</keyword>
<accession>Q5M555</accession>
<proteinExistence type="inferred from homology"/>